<sequence>MGIKVYKPTTNGRRNMTSLDFAEITTSTPEKSLLVSLKNKAGRNNNGRITVRHQGGGHKRHYRLIDFKRNKDGVEAVVKTIEYDPNRTANIALVHYTDGVKAYIIAPKGLEVGQRIVSGPDADIKVGNALPLANIPVGTVIHNIELKPGKGAELVRAAGASAQVLGQEGKYVLVRLQSGEVRMILGTCRATIGTVGNEQQSLINLGKAGRNRWKGVRPTVRGSVMNPNDHPHGGGEGKAPVGRKAPSTPWGKPALGLKTRNKKAKSDKLIVRRRNEK</sequence>
<feature type="chain" id="PRO_0000237250" description="Large ribosomal subunit protein uL2">
    <location>
        <begin position="1"/>
        <end position="277"/>
    </location>
</feature>
<feature type="region of interest" description="Disordered" evidence="2">
    <location>
        <begin position="222"/>
        <end position="277"/>
    </location>
</feature>
<feature type="compositionally biased region" description="Basic and acidic residues" evidence="2">
    <location>
        <begin position="264"/>
        <end position="277"/>
    </location>
</feature>
<reference key="1">
    <citation type="journal article" date="2004" name="Nat. Biotechnol.">
        <title>Complete sequence and comparative genome analysis of the dairy bacterium Streptococcus thermophilus.</title>
        <authorList>
            <person name="Bolotin A."/>
            <person name="Quinquis B."/>
            <person name="Renault P."/>
            <person name="Sorokin A."/>
            <person name="Ehrlich S.D."/>
            <person name="Kulakauskas S."/>
            <person name="Lapidus A."/>
            <person name="Goltsman E."/>
            <person name="Mazur M."/>
            <person name="Pusch G.D."/>
            <person name="Fonstein M."/>
            <person name="Overbeek R."/>
            <person name="Kyprides N."/>
            <person name="Purnelle B."/>
            <person name="Prozzi D."/>
            <person name="Ngui K."/>
            <person name="Masuy D."/>
            <person name="Hancy F."/>
            <person name="Burteau S."/>
            <person name="Boutry M."/>
            <person name="Delcour J."/>
            <person name="Goffeau A."/>
            <person name="Hols P."/>
        </authorList>
    </citation>
    <scope>NUCLEOTIDE SEQUENCE [LARGE SCALE GENOMIC DNA]</scope>
    <source>
        <strain>CNRZ 1066</strain>
    </source>
</reference>
<protein>
    <recommendedName>
        <fullName evidence="1">Large ribosomal subunit protein uL2</fullName>
    </recommendedName>
    <alternativeName>
        <fullName evidence="3">50S ribosomal protein L2</fullName>
    </alternativeName>
</protein>
<accession>Q5LXR4</accession>
<keyword id="KW-0687">Ribonucleoprotein</keyword>
<keyword id="KW-0689">Ribosomal protein</keyword>
<keyword id="KW-0694">RNA-binding</keyword>
<keyword id="KW-0699">rRNA-binding</keyword>
<organism>
    <name type="scientific">Streptococcus thermophilus (strain CNRZ 1066)</name>
    <dbReference type="NCBI Taxonomy" id="299768"/>
    <lineage>
        <taxon>Bacteria</taxon>
        <taxon>Bacillati</taxon>
        <taxon>Bacillota</taxon>
        <taxon>Bacilli</taxon>
        <taxon>Lactobacillales</taxon>
        <taxon>Streptococcaceae</taxon>
        <taxon>Streptococcus</taxon>
    </lineage>
</organism>
<name>RL2_STRT1</name>
<proteinExistence type="inferred from homology"/>
<comment type="function">
    <text evidence="1">One of the primary rRNA binding proteins. Required for association of the 30S and 50S subunits to form the 70S ribosome, for tRNA binding and peptide bond formation. It has been suggested to have peptidyltransferase activity; this is somewhat controversial. Makes several contacts with the 16S rRNA in the 70S ribosome.</text>
</comment>
<comment type="subunit">
    <text evidence="1">Part of the 50S ribosomal subunit. Forms a bridge to the 30S subunit in the 70S ribosome.</text>
</comment>
<comment type="similarity">
    <text evidence="1">Belongs to the universal ribosomal protein uL2 family.</text>
</comment>
<evidence type="ECO:0000255" key="1">
    <source>
        <dbReference type="HAMAP-Rule" id="MF_01320"/>
    </source>
</evidence>
<evidence type="ECO:0000256" key="2">
    <source>
        <dbReference type="SAM" id="MobiDB-lite"/>
    </source>
</evidence>
<evidence type="ECO:0000305" key="3"/>
<gene>
    <name evidence="1" type="primary">rplB</name>
    <name type="ordered locus">str1931</name>
</gene>
<dbReference type="EMBL" id="CP000024">
    <property type="protein sequence ID" value="AAV63444.1"/>
    <property type="molecule type" value="Genomic_DNA"/>
</dbReference>
<dbReference type="RefSeq" id="WP_002952161.1">
    <property type="nucleotide sequence ID" value="NC_006449.1"/>
</dbReference>
<dbReference type="SMR" id="Q5LXR4"/>
<dbReference type="GeneID" id="66899659"/>
<dbReference type="KEGG" id="stc:str1931"/>
<dbReference type="HOGENOM" id="CLU_036235_2_1_9"/>
<dbReference type="GO" id="GO:0015934">
    <property type="term" value="C:large ribosomal subunit"/>
    <property type="evidence" value="ECO:0007669"/>
    <property type="project" value="InterPro"/>
</dbReference>
<dbReference type="GO" id="GO:0019843">
    <property type="term" value="F:rRNA binding"/>
    <property type="evidence" value="ECO:0007669"/>
    <property type="project" value="UniProtKB-UniRule"/>
</dbReference>
<dbReference type="GO" id="GO:0003735">
    <property type="term" value="F:structural constituent of ribosome"/>
    <property type="evidence" value="ECO:0007669"/>
    <property type="project" value="InterPro"/>
</dbReference>
<dbReference type="GO" id="GO:0016740">
    <property type="term" value="F:transferase activity"/>
    <property type="evidence" value="ECO:0007669"/>
    <property type="project" value="InterPro"/>
</dbReference>
<dbReference type="GO" id="GO:0002181">
    <property type="term" value="P:cytoplasmic translation"/>
    <property type="evidence" value="ECO:0007669"/>
    <property type="project" value="TreeGrafter"/>
</dbReference>
<dbReference type="FunFam" id="2.30.30.30:FF:000001">
    <property type="entry name" value="50S ribosomal protein L2"/>
    <property type="match status" value="1"/>
</dbReference>
<dbReference type="FunFam" id="2.40.50.140:FF:000003">
    <property type="entry name" value="50S ribosomal protein L2"/>
    <property type="match status" value="1"/>
</dbReference>
<dbReference type="FunFam" id="4.10.950.10:FF:000001">
    <property type="entry name" value="50S ribosomal protein L2"/>
    <property type="match status" value="1"/>
</dbReference>
<dbReference type="Gene3D" id="2.30.30.30">
    <property type="match status" value="1"/>
</dbReference>
<dbReference type="Gene3D" id="2.40.50.140">
    <property type="entry name" value="Nucleic acid-binding proteins"/>
    <property type="match status" value="1"/>
</dbReference>
<dbReference type="Gene3D" id="4.10.950.10">
    <property type="entry name" value="Ribosomal protein L2, domain 3"/>
    <property type="match status" value="1"/>
</dbReference>
<dbReference type="HAMAP" id="MF_01320_B">
    <property type="entry name" value="Ribosomal_uL2_B"/>
    <property type="match status" value="1"/>
</dbReference>
<dbReference type="InterPro" id="IPR012340">
    <property type="entry name" value="NA-bd_OB-fold"/>
</dbReference>
<dbReference type="InterPro" id="IPR014722">
    <property type="entry name" value="Rib_uL2_dom2"/>
</dbReference>
<dbReference type="InterPro" id="IPR002171">
    <property type="entry name" value="Ribosomal_uL2"/>
</dbReference>
<dbReference type="InterPro" id="IPR005880">
    <property type="entry name" value="Ribosomal_uL2_bac/org-type"/>
</dbReference>
<dbReference type="InterPro" id="IPR022669">
    <property type="entry name" value="Ribosomal_uL2_C"/>
</dbReference>
<dbReference type="InterPro" id="IPR022671">
    <property type="entry name" value="Ribosomal_uL2_CS"/>
</dbReference>
<dbReference type="InterPro" id="IPR014726">
    <property type="entry name" value="Ribosomal_uL2_dom3"/>
</dbReference>
<dbReference type="InterPro" id="IPR022666">
    <property type="entry name" value="Ribosomal_uL2_RNA-bd_dom"/>
</dbReference>
<dbReference type="InterPro" id="IPR008991">
    <property type="entry name" value="Translation_prot_SH3-like_sf"/>
</dbReference>
<dbReference type="NCBIfam" id="TIGR01171">
    <property type="entry name" value="rplB_bact"/>
    <property type="match status" value="1"/>
</dbReference>
<dbReference type="PANTHER" id="PTHR13691:SF5">
    <property type="entry name" value="LARGE RIBOSOMAL SUBUNIT PROTEIN UL2M"/>
    <property type="match status" value="1"/>
</dbReference>
<dbReference type="PANTHER" id="PTHR13691">
    <property type="entry name" value="RIBOSOMAL PROTEIN L2"/>
    <property type="match status" value="1"/>
</dbReference>
<dbReference type="Pfam" id="PF00181">
    <property type="entry name" value="Ribosomal_L2"/>
    <property type="match status" value="1"/>
</dbReference>
<dbReference type="Pfam" id="PF03947">
    <property type="entry name" value="Ribosomal_L2_C"/>
    <property type="match status" value="1"/>
</dbReference>
<dbReference type="PIRSF" id="PIRSF002158">
    <property type="entry name" value="Ribosomal_L2"/>
    <property type="match status" value="1"/>
</dbReference>
<dbReference type="SMART" id="SM01383">
    <property type="entry name" value="Ribosomal_L2"/>
    <property type="match status" value="1"/>
</dbReference>
<dbReference type="SMART" id="SM01382">
    <property type="entry name" value="Ribosomal_L2_C"/>
    <property type="match status" value="1"/>
</dbReference>
<dbReference type="SUPFAM" id="SSF50249">
    <property type="entry name" value="Nucleic acid-binding proteins"/>
    <property type="match status" value="1"/>
</dbReference>
<dbReference type="SUPFAM" id="SSF50104">
    <property type="entry name" value="Translation proteins SH3-like domain"/>
    <property type="match status" value="1"/>
</dbReference>
<dbReference type="PROSITE" id="PS00467">
    <property type="entry name" value="RIBOSOMAL_L2"/>
    <property type="match status" value="1"/>
</dbReference>